<protein>
    <recommendedName>
        <fullName>Signaling lymphocytic activation molecule</fullName>
    </recommendedName>
    <cdAntigenName>CD150</cdAntigenName>
</protein>
<feature type="signal peptide" evidence="3">
    <location>
        <begin position="1"/>
        <end position="26"/>
    </location>
</feature>
<feature type="chain" id="PRO_0000014958" description="Signaling lymphocytic activation molecule">
    <location>
        <begin position="27"/>
        <end position="342"/>
    </location>
</feature>
<feature type="topological domain" description="Extracellular" evidence="3">
    <location>
        <begin position="27"/>
        <end position="237"/>
    </location>
</feature>
<feature type="transmembrane region" description="Helical" evidence="3">
    <location>
        <begin position="238"/>
        <end position="261"/>
    </location>
</feature>
<feature type="topological domain" description="Cytoplasmic" evidence="3">
    <location>
        <begin position="262"/>
        <end position="342"/>
    </location>
</feature>
<feature type="domain" description="Ig-like V-type">
    <location>
        <begin position="29"/>
        <end position="138"/>
    </location>
</feature>
<feature type="domain" description="Ig-like C2-type">
    <location>
        <begin position="144"/>
        <end position="223"/>
    </location>
</feature>
<feature type="short sequence motif" description="ITSM 1" evidence="1">
    <location>
        <begin position="282"/>
        <end position="287"/>
    </location>
</feature>
<feature type="short sequence motif" description="SH2-binding" evidence="3">
    <location>
        <begin position="310"/>
        <end position="315"/>
    </location>
</feature>
<feature type="short sequence motif" description="ITSM 2" evidence="1">
    <location>
        <begin position="332"/>
        <end position="337"/>
    </location>
</feature>
<feature type="modified residue" description="Phosphotyrosine; by FYN" evidence="1">
    <location>
        <position position="284"/>
    </location>
</feature>
<feature type="modified residue" description="Phosphotyrosine; by FYN" evidence="1">
    <location>
        <position position="310"/>
    </location>
</feature>
<feature type="modified residue" description="Phosphotyrosine; by FYN" evidence="1">
    <location>
        <position position="334"/>
    </location>
</feature>
<feature type="glycosylation site" description="N-linked (GlcNAc...) asparagine" evidence="3">
    <location>
        <position position="57"/>
    </location>
</feature>
<feature type="glycosylation site" description="N-linked (GlcNAc...) asparagine" evidence="3">
    <location>
        <position position="102"/>
    </location>
</feature>
<feature type="glycosylation site" description="N-linked (GlcNAc...) asparagine" evidence="3">
    <location>
        <position position="125"/>
    </location>
</feature>
<feature type="glycosylation site" description="N-linked (GlcNAc...) asparagine" evidence="3">
    <location>
        <position position="150"/>
    </location>
</feature>
<feature type="glycosylation site" description="N-linked (GlcNAc...) asparagine" evidence="3">
    <location>
        <position position="157"/>
    </location>
</feature>
<feature type="glycosylation site" description="N-linked (GlcNAc...) asparagine" evidence="3">
    <location>
        <position position="189"/>
    </location>
</feature>
<feature type="glycosylation site" description="N-linked (GlcNAc...) asparagine" evidence="3">
    <location>
        <position position="217"/>
    </location>
</feature>
<feature type="disulfide bond" evidence="4">
    <location>
        <begin position="158"/>
        <end position="228"/>
    </location>
</feature>
<feature type="disulfide bond" evidence="4">
    <location>
        <begin position="164"/>
        <end position="209"/>
    </location>
</feature>
<feature type="sequence conflict" description="In Ref. 2; AAK97460." evidence="6" ref="2">
    <original>N</original>
    <variation>S</variation>
    <location>
        <position position="72"/>
    </location>
</feature>
<keyword id="KW-1064">Adaptive immunity</keyword>
<keyword id="KW-1003">Cell membrane</keyword>
<keyword id="KW-1015">Disulfide bond</keyword>
<keyword id="KW-0325">Glycoprotein</keyword>
<keyword id="KW-0945">Host-virus interaction</keyword>
<keyword id="KW-0391">Immunity</keyword>
<keyword id="KW-0393">Immunoglobulin domain</keyword>
<keyword id="KW-0399">Innate immunity</keyword>
<keyword id="KW-0472">Membrane</keyword>
<keyword id="KW-0597">Phosphoprotein</keyword>
<keyword id="KW-0675">Receptor</keyword>
<keyword id="KW-1185">Reference proteome</keyword>
<keyword id="KW-0677">Repeat</keyword>
<keyword id="KW-0732">Signal</keyword>
<keyword id="KW-0812">Transmembrane</keyword>
<keyword id="KW-1133">Transmembrane helix</keyword>
<comment type="function">
    <text evidence="1 2">Self-ligand receptor of the signaling lymphocytic activation molecule (SLAM) family. SLAM receptors triggered by homo- or heterotypic cell-cell interactions are modulating the activation and differentiation of a wide variety of immune cells and thus are involved in the regulation and interconnection of both innate and adaptive immune response. Activities are controlled by presence or absence of small cytoplasmic adapter proteins, SH2D1A/SAP and/or SH2D1B/EAT-2. SLAMF1-induced signal-transduction events in T-lymphocytes are different from those in B-cells. Two modes of SLAMF1 signaling seem to exist: one depending on SH2D1A (and perhaps SH2D1B) and another in which protein-tyrosine phosphatase 2C (PTPN11)-dependent signal transduction operates. Initially it has been proposed that association with SH2D1A prevents binding to inhibitory effectors including INPP5D/SHIP1 and PTPN11/SHP-2. However, signaling is also regulated by SH2D1A which can simultaneously interact with and recruit FYN which subsequently phosphorylates and activates SLAMF1. Mediates IL-2-independent proliferation of activated T cells during immune responses and induces IFN-gamma production. Downstreaming signaling involves INPP5D/SHIP1, DOK1 and DOK2 leading to inhibited IFN-gamma production in T-cells, and PRKCQ, BCL10 and NFKB1 leading to increased T-cell activation and Th2 cytokine production. Promotes T-cell receptor-induced IL-4 secretion by CD4(+) cells. Inhibits antigen receptor-mediated production of IFN-gamma, but not IL-2, in CD4(-)/CD8(-) T-cells. Required for IL-4 production by germinal centers T follicular helper (T(Fh))cells. May inhibit CD40-induced signal transduction in monocyte-derived dendritic cells. May play a role in allergic responses and may regulate allergen-induced Th2 cytokine and Th1 cytokine secretion. In conjunction with SLAMF6 controls the transition between positive selection and the subsequent expansion and differentiation of the thymocytic natural killer T (NKT) cell lineage. Involved in the peripheral differentiation of indifferent natural killer T (iNKT) cells toward a regulatory NKT2 type. In macrophages involved in down-regulation of IL-12, TNF-alpha and nitric oxide in response to lipopolysaccharide (LPS). In B-cells activates the ERK signaling pathway independently of SH2D1A but implicating both, SYK and INPP5D, and activates Akt signaling dependent on SYK and SH2D1A. In conjunction with SLAMF5 and SLAMF6 may be a negative regulator of the humoral immune response.</text>
</comment>
<comment type="subunit">
    <text evidence="1 2 5">Interacts (via cytoplasmic domain) with SH2D1A and SH2D1B; SH2D1A mediates association with FYN. Interacts (via cytoplasmic domain phosphorylated on tyrosine residues) with INPP5D and PTPN11; presence of SH2D1A facilitates binding to INPP5D (By similarity). Interacts with MAP4K1. Interacts with PIK3C3, BECN1 and UVRAG; indicative for an association with PI3K complex II (PI3KC3-C2) (By similarity). Interacts with canine distemper virus HN protein; suggesting that it may serve as a receptor.</text>
</comment>
<comment type="subcellular location">
    <subcellularLocation>
        <location evidence="1">Cell membrane</location>
        <topology>Single-pass type I membrane protein</topology>
    </subcellularLocation>
    <text evidence="1">Present on the surface of B-cells and T-cells. Located at the plasma membrane contacts between neighboring T cells.</text>
</comment>
<comment type="domain">
    <text evidence="1">The ITSMs (immunoreceptor tyrosine-based switch motifs) with the consensus sequence T-X-Y-X-X-[VI] present in SLAM family receptors have overlapping specificity for activating and inhibitory SH2 domain-containingbinding partners. Especially they mediate the interaction with the SH2 domain of SH2D1A and SH2D1B. A 'two-out-of-three-pronged' mechanism is proposed involving threonine (position -2), phosphorylated tyrosine (position 0) and valine/isoleucine (position +3). Binding is mediated by either three 'prongs' (for high affinity binding involving ITSM 1) or a combination of any two also including non-phosphorylated Tyr-284 of ITSM 1. ITSM 2 needs to be phosphoryated on Tyr-334 for SH2D1A binding.</text>
</comment>
<comment type="PTM">
    <text evidence="1">Phosphorylated on tyrosine residues by FYN.</text>
</comment>
<accession>Q95MM9</accession>
<accession>Q95L99</accession>
<gene>
    <name type="primary">SLAMF1</name>
    <name type="synonym">SLAM</name>
</gene>
<evidence type="ECO:0000250" key="1">
    <source>
        <dbReference type="UniProtKB" id="Q13291"/>
    </source>
</evidence>
<evidence type="ECO:0000250" key="2">
    <source>
        <dbReference type="UniProtKB" id="Q9QUM4"/>
    </source>
</evidence>
<evidence type="ECO:0000255" key="3"/>
<evidence type="ECO:0000255" key="4">
    <source>
        <dbReference type="PROSITE-ProRule" id="PRU00114"/>
    </source>
</evidence>
<evidence type="ECO:0000269" key="5">
    <source>
    </source>
</evidence>
<evidence type="ECO:0000305" key="6"/>
<reference key="1">
    <citation type="journal article" date="2001" name="J. Virol.">
        <title>Morbilliviruses use signaling lymphocyte activation molecules (CD150) as cellular receptors.</title>
        <authorList>
            <person name="Tatsuo H."/>
            <person name="Ono N."/>
            <person name="Yanagi Y."/>
        </authorList>
    </citation>
    <scope>NUCLEOTIDE SEQUENCE [MRNA]</scope>
    <scope>INTERACTION WITH CANINE DISTEMPER VIRUS HN PROTEIN</scope>
</reference>
<reference key="2">
    <citation type="submission" date="2001-06" db="EMBL/GenBank/DDBJ databases">
        <title>CD150 is a cellular receptor for canine distemper virus.</title>
        <authorList>
            <person name="Richardson C.D."/>
        </authorList>
    </citation>
    <scope>NUCLEOTIDE SEQUENCE [MRNA]</scope>
</reference>
<sequence>MDSRGFLSLRCLLVLALASKLSCGTGESLMNCPEVPGKLGSSLQLSLASEGISKRMNKSIHILVTRAESPGNSIKKKIVSLDLPEGGSPRYLENGYKFHLENLTLRILESRRENEGWYFMTLEENFSVQHFCLQLKLYEQVSTPEIKVLNWTQENGNCSMMLACEVEKGDNVVYSWSEKLGIDPLIPANSSHLLHLSLGPQHVNNVYVCTVSNPVSNRSWSFNPWSKCRPESSVPRQWRLYAGLFLGGIVGVILIFEVVLLLLRRRGKTNHYKPTKEEKSLTIYAQVQKSGSTQKKPDPLPAEDPCTTIYVAATEPVPEPAPEPVQEPHSITVYASVTFPES</sequence>
<proteinExistence type="evidence at protein level"/>
<name>SLAF1_CANLF</name>
<organism>
    <name type="scientific">Canis lupus familiaris</name>
    <name type="common">Dog</name>
    <name type="synonym">Canis familiaris</name>
    <dbReference type="NCBI Taxonomy" id="9615"/>
    <lineage>
        <taxon>Eukaryota</taxon>
        <taxon>Metazoa</taxon>
        <taxon>Chordata</taxon>
        <taxon>Craniata</taxon>
        <taxon>Vertebrata</taxon>
        <taxon>Euteleostomi</taxon>
        <taxon>Mammalia</taxon>
        <taxon>Eutheria</taxon>
        <taxon>Laurasiatheria</taxon>
        <taxon>Carnivora</taxon>
        <taxon>Caniformia</taxon>
        <taxon>Canidae</taxon>
        <taxon>Canis</taxon>
    </lineage>
</organism>
<dbReference type="EMBL" id="AF325357">
    <property type="protein sequence ID" value="AAK61857.1"/>
    <property type="molecule type" value="mRNA"/>
</dbReference>
<dbReference type="EMBL" id="AF390108">
    <property type="protein sequence ID" value="AAK97460.1"/>
    <property type="molecule type" value="mRNA"/>
</dbReference>
<dbReference type="RefSeq" id="NP_001003084.1">
    <property type="nucleotide sequence ID" value="NM_001003084.1"/>
</dbReference>
<dbReference type="SMR" id="Q95MM9"/>
<dbReference type="FunCoup" id="Q95MM9">
    <property type="interactions" value="21"/>
</dbReference>
<dbReference type="STRING" id="9615.ENSCAFP00000018535"/>
<dbReference type="GlyCosmos" id="Q95MM9">
    <property type="glycosylation" value="7 sites, No reported glycans"/>
</dbReference>
<dbReference type="PaxDb" id="9612-ENSCAFP00000018535"/>
<dbReference type="Ensembl" id="ENSCAFT00000019982.5">
    <property type="protein sequence ID" value="ENSCAFP00000018535.3"/>
    <property type="gene ID" value="ENSCAFG00000012579.5"/>
</dbReference>
<dbReference type="Ensembl" id="ENSCAFT00030032271.1">
    <property type="protein sequence ID" value="ENSCAFP00030028141.1"/>
    <property type="gene ID" value="ENSCAFG00030017518.1"/>
</dbReference>
<dbReference type="Ensembl" id="ENSCAFT00040028283.1">
    <property type="protein sequence ID" value="ENSCAFP00040024569.1"/>
    <property type="gene ID" value="ENSCAFG00040015313.1"/>
</dbReference>
<dbReference type="Ensembl" id="ENSCAFT00845053817.1">
    <property type="protein sequence ID" value="ENSCAFP00845042296.1"/>
    <property type="gene ID" value="ENSCAFG00845030320.1"/>
</dbReference>
<dbReference type="GeneID" id="403642"/>
<dbReference type="KEGG" id="cfa:403642"/>
<dbReference type="CTD" id="6504"/>
<dbReference type="VEuPathDB" id="HostDB:ENSCAFG00845030320"/>
<dbReference type="VGNC" id="VGNC:46206">
    <property type="gene designation" value="SLAMF1"/>
</dbReference>
<dbReference type="eggNOG" id="ENOG502SVMG">
    <property type="taxonomic scope" value="Eukaryota"/>
</dbReference>
<dbReference type="GeneTree" id="ENSGT01030000234540"/>
<dbReference type="HOGENOM" id="CLU_066453_0_0_1"/>
<dbReference type="InParanoid" id="Q95MM9"/>
<dbReference type="OMA" id="DHVAYNW"/>
<dbReference type="OrthoDB" id="9835793at2759"/>
<dbReference type="TreeFam" id="TF334964"/>
<dbReference type="Proteomes" id="UP000002254">
    <property type="component" value="Chromosome 38"/>
</dbReference>
<dbReference type="Proteomes" id="UP000694429">
    <property type="component" value="Chromosome 38"/>
</dbReference>
<dbReference type="Proteomes" id="UP000694542">
    <property type="component" value="Chromosome 38"/>
</dbReference>
<dbReference type="Proteomes" id="UP000805418">
    <property type="component" value="Chromosome 38"/>
</dbReference>
<dbReference type="Bgee" id="ENSCAFG00000012579">
    <property type="expression patterns" value="Expressed in thymus and 23 other cell types or tissues"/>
</dbReference>
<dbReference type="GO" id="GO:0009897">
    <property type="term" value="C:external side of plasma membrane"/>
    <property type="evidence" value="ECO:0000318"/>
    <property type="project" value="GO_Central"/>
</dbReference>
<dbReference type="GO" id="GO:0045335">
    <property type="term" value="C:phagocytic vesicle"/>
    <property type="evidence" value="ECO:0007669"/>
    <property type="project" value="Ensembl"/>
</dbReference>
<dbReference type="GO" id="GO:0042802">
    <property type="term" value="F:identical protein binding"/>
    <property type="evidence" value="ECO:0007669"/>
    <property type="project" value="Ensembl"/>
</dbReference>
<dbReference type="GO" id="GO:0042169">
    <property type="term" value="F:SH2 domain binding"/>
    <property type="evidence" value="ECO:0007669"/>
    <property type="project" value="Ensembl"/>
</dbReference>
<dbReference type="GO" id="GO:0038023">
    <property type="term" value="F:signaling receptor activity"/>
    <property type="evidence" value="ECO:0000318"/>
    <property type="project" value="GO_Central"/>
</dbReference>
<dbReference type="GO" id="GO:0001618">
    <property type="term" value="F:virus receptor activity"/>
    <property type="evidence" value="ECO:0007669"/>
    <property type="project" value="Ensembl"/>
</dbReference>
<dbReference type="GO" id="GO:0002250">
    <property type="term" value="P:adaptive immune response"/>
    <property type="evidence" value="ECO:0007669"/>
    <property type="project" value="UniProtKB-KW"/>
</dbReference>
<dbReference type="GO" id="GO:0006955">
    <property type="term" value="P:immune response"/>
    <property type="evidence" value="ECO:0000318"/>
    <property type="project" value="GO_Central"/>
</dbReference>
<dbReference type="GO" id="GO:0045087">
    <property type="term" value="P:innate immune response"/>
    <property type="evidence" value="ECO:0007669"/>
    <property type="project" value="UniProtKB-KW"/>
</dbReference>
<dbReference type="GO" id="GO:0002232">
    <property type="term" value="P:leukocyte chemotaxis involved in inflammatory response"/>
    <property type="evidence" value="ECO:0007669"/>
    <property type="project" value="Ensembl"/>
</dbReference>
<dbReference type="GO" id="GO:0002277">
    <property type="term" value="P:myeloid dendritic cell activation involved in immune response"/>
    <property type="evidence" value="ECO:0007669"/>
    <property type="project" value="Ensembl"/>
</dbReference>
<dbReference type="GO" id="GO:0001779">
    <property type="term" value="P:natural killer cell differentiation"/>
    <property type="evidence" value="ECO:0007669"/>
    <property type="project" value="Ensembl"/>
</dbReference>
<dbReference type="GO" id="GO:0001787">
    <property type="term" value="P:natural killer cell proliferation"/>
    <property type="evidence" value="ECO:0007669"/>
    <property type="project" value="Ensembl"/>
</dbReference>
<dbReference type="GO" id="GO:2000349">
    <property type="term" value="P:negative regulation of CD40 signaling pathway"/>
    <property type="evidence" value="ECO:0007669"/>
    <property type="project" value="Ensembl"/>
</dbReference>
<dbReference type="GO" id="GO:0032695">
    <property type="term" value="P:negative regulation of interleukin-12 production"/>
    <property type="evidence" value="ECO:0007669"/>
    <property type="project" value="Ensembl"/>
</dbReference>
<dbReference type="GO" id="GO:0032715">
    <property type="term" value="P:negative regulation of interleukin-6 production"/>
    <property type="evidence" value="ECO:0007669"/>
    <property type="project" value="Ensembl"/>
</dbReference>
<dbReference type="GO" id="GO:0002725">
    <property type="term" value="P:negative regulation of T cell cytokine production"/>
    <property type="evidence" value="ECO:0007669"/>
    <property type="project" value="Ensembl"/>
</dbReference>
<dbReference type="GO" id="GO:0032720">
    <property type="term" value="P:negative regulation of tumor necrosis factor production"/>
    <property type="evidence" value="ECO:0007669"/>
    <property type="project" value="Ensembl"/>
</dbReference>
<dbReference type="GO" id="GO:0032689">
    <property type="term" value="P:negative regulation of type II interferon production"/>
    <property type="evidence" value="ECO:0007669"/>
    <property type="project" value="Ensembl"/>
</dbReference>
<dbReference type="GO" id="GO:0042104">
    <property type="term" value="P:positive regulation of activated T cell proliferation"/>
    <property type="evidence" value="ECO:0007669"/>
    <property type="project" value="Ensembl"/>
</dbReference>
<dbReference type="GO" id="GO:2000510">
    <property type="term" value="P:positive regulation of dendritic cell chemotaxis"/>
    <property type="evidence" value="ECO:0007669"/>
    <property type="project" value="Ensembl"/>
</dbReference>
<dbReference type="GO" id="GO:0070374">
    <property type="term" value="P:positive regulation of ERK1 and ERK2 cascade"/>
    <property type="evidence" value="ECO:0007669"/>
    <property type="project" value="Ensembl"/>
</dbReference>
<dbReference type="GO" id="GO:0046330">
    <property type="term" value="P:positive regulation of JNK cascade"/>
    <property type="evidence" value="ECO:0007669"/>
    <property type="project" value="Ensembl"/>
</dbReference>
<dbReference type="GO" id="GO:0010759">
    <property type="term" value="P:positive regulation of macrophage chemotaxis"/>
    <property type="evidence" value="ECO:0007669"/>
    <property type="project" value="Ensembl"/>
</dbReference>
<dbReference type="GO" id="GO:2000556">
    <property type="term" value="P:positive regulation of T-helper 1 cell cytokine production"/>
    <property type="evidence" value="ECO:0007669"/>
    <property type="project" value="Ensembl"/>
</dbReference>
<dbReference type="GO" id="GO:0032729">
    <property type="term" value="P:positive regulation of type II interferon production"/>
    <property type="evidence" value="ECO:0007669"/>
    <property type="project" value="Ensembl"/>
</dbReference>
<dbReference type="GO" id="GO:0031338">
    <property type="term" value="P:regulation of vesicle fusion"/>
    <property type="evidence" value="ECO:0007669"/>
    <property type="project" value="Ensembl"/>
</dbReference>
<dbReference type="Gene3D" id="2.60.40.10">
    <property type="entry name" value="Immunoglobulins"/>
    <property type="match status" value="2"/>
</dbReference>
<dbReference type="InterPro" id="IPR015631">
    <property type="entry name" value="CD2/SLAM_rcpt"/>
</dbReference>
<dbReference type="InterPro" id="IPR007110">
    <property type="entry name" value="Ig-like_dom"/>
</dbReference>
<dbReference type="InterPro" id="IPR013783">
    <property type="entry name" value="Ig-like_fold"/>
</dbReference>
<dbReference type="InterPro" id="IPR010407">
    <property type="entry name" value="Sig_lymph_act_molc_N"/>
</dbReference>
<dbReference type="PANTHER" id="PTHR12080">
    <property type="entry name" value="SIGNALING LYMPHOCYTIC ACTIVATION MOLECULE"/>
    <property type="match status" value="1"/>
</dbReference>
<dbReference type="PANTHER" id="PTHR12080:SF49">
    <property type="entry name" value="SIGNALING LYMPHOCYTIC ACTIVATION MOLECULE"/>
    <property type="match status" value="1"/>
</dbReference>
<dbReference type="Pfam" id="PF06214">
    <property type="entry name" value="SLAM"/>
    <property type="match status" value="1"/>
</dbReference>
<dbReference type="PROSITE" id="PS50835">
    <property type="entry name" value="IG_LIKE"/>
    <property type="match status" value="1"/>
</dbReference>